<proteinExistence type="inferred from homology"/>
<reference key="1">
    <citation type="submission" date="2008-05" db="EMBL/GenBank/DDBJ databases">
        <title>Complete sequence of Shigella boydii serotype 18 strain BS512.</title>
        <authorList>
            <person name="Rasko D.A."/>
            <person name="Rosovitz M."/>
            <person name="Maurelli A.T."/>
            <person name="Myers G."/>
            <person name="Seshadri R."/>
            <person name="Cer R."/>
            <person name="Jiang L."/>
            <person name="Ravel J."/>
            <person name="Sebastian Y."/>
        </authorList>
    </citation>
    <scope>NUCLEOTIDE SEQUENCE [LARGE SCALE GENOMIC DNA]</scope>
    <source>
        <strain>CDC 3083-94 / BS512</strain>
    </source>
</reference>
<protein>
    <recommendedName>
        <fullName evidence="1">Peptidase E</fullName>
        <ecNumber evidence="1">3.4.13.21</ecNumber>
    </recommendedName>
    <alternativeName>
        <fullName evidence="1">Alpha-aspartyl dipeptidase</fullName>
    </alternativeName>
    <alternativeName>
        <fullName evidence="1">Asp-specific dipeptidase</fullName>
    </alternativeName>
    <alternativeName>
        <fullName evidence="1">Dipeptidase E</fullName>
    </alternativeName>
</protein>
<accession>B2TX41</accession>
<feature type="chain" id="PRO_1000127254" description="Peptidase E">
    <location>
        <begin position="1"/>
        <end position="229"/>
    </location>
</feature>
<feature type="active site" description="Charge relay system" evidence="1">
    <location>
        <position position="120"/>
    </location>
</feature>
<feature type="active site" description="Charge relay system" evidence="1">
    <location>
        <position position="135"/>
    </location>
</feature>
<feature type="active site" description="Charge relay system" evidence="1">
    <location>
        <position position="157"/>
    </location>
</feature>
<keyword id="KW-0963">Cytoplasm</keyword>
<keyword id="KW-0224">Dipeptidase</keyword>
<keyword id="KW-0378">Hydrolase</keyword>
<keyword id="KW-0645">Protease</keyword>
<keyword id="KW-1185">Reference proteome</keyword>
<keyword id="KW-0720">Serine protease</keyword>
<comment type="function">
    <text evidence="1">Hydrolyzes dipeptides containing N-terminal aspartate residues. May play a role in allowing the cell to use peptide aspartate to spare carbon otherwise required for the synthesis of the aspartate family of amino acids.</text>
</comment>
<comment type="catalytic activity">
    <reaction evidence="1">
        <text>Dipeptidase E catalyzes the hydrolysis of dipeptides Asp-|-Xaa. It does not act on peptides with N-terminal Glu, Asn or Gln, nor does it cleave isoaspartyl peptides.</text>
        <dbReference type="EC" id="3.4.13.21"/>
    </reaction>
</comment>
<comment type="subcellular location">
    <subcellularLocation>
        <location evidence="1">Cytoplasm</location>
    </subcellularLocation>
</comment>
<comment type="similarity">
    <text evidence="1">Belongs to the peptidase S51 family.</text>
</comment>
<sequence>MELLLLSNSTLPGKAWLEHALPLIAEQLQGRRSAVFIPFAGVTQTWDDYTAKTAAVLAPLGVSVTGIHSVVDPVAAIENAEIVIVGGGNTFQLLKQCRERGLLAPITDVVKRGALYIGWSAGANLACPTIRTTNDMPIVDPQGFDALNLFPLQINPHFTNALPEGHKGETREQRIRELLVVAPELTIIGLPEGNWITVSKGHATLGGPNTTYVFKAGEEAVPLEAGHRF</sequence>
<organism>
    <name type="scientific">Shigella boydii serotype 18 (strain CDC 3083-94 / BS512)</name>
    <dbReference type="NCBI Taxonomy" id="344609"/>
    <lineage>
        <taxon>Bacteria</taxon>
        <taxon>Pseudomonadati</taxon>
        <taxon>Pseudomonadota</taxon>
        <taxon>Gammaproteobacteria</taxon>
        <taxon>Enterobacterales</taxon>
        <taxon>Enterobacteriaceae</taxon>
        <taxon>Shigella</taxon>
    </lineage>
</organism>
<gene>
    <name evidence="1" type="primary">pepE</name>
    <name type="ordered locus">SbBS512_E4515</name>
</gene>
<evidence type="ECO:0000255" key="1">
    <source>
        <dbReference type="HAMAP-Rule" id="MF_00510"/>
    </source>
</evidence>
<name>PEPE_SHIB3</name>
<dbReference type="EC" id="3.4.13.21" evidence="1"/>
<dbReference type="EMBL" id="CP001063">
    <property type="protein sequence ID" value="ACD08492.1"/>
    <property type="molecule type" value="Genomic_DNA"/>
</dbReference>
<dbReference type="RefSeq" id="WP_000421763.1">
    <property type="nucleotide sequence ID" value="NC_010658.1"/>
</dbReference>
<dbReference type="SMR" id="B2TX41"/>
<dbReference type="STRING" id="344609.SbBS512_E4515"/>
<dbReference type="MEROPS" id="S51.001"/>
<dbReference type="GeneID" id="93777874"/>
<dbReference type="KEGG" id="sbc:SbBS512_E4515"/>
<dbReference type="HOGENOM" id="CLU_071689_0_0_6"/>
<dbReference type="Proteomes" id="UP000001030">
    <property type="component" value="Chromosome"/>
</dbReference>
<dbReference type="GO" id="GO:0005737">
    <property type="term" value="C:cytoplasm"/>
    <property type="evidence" value="ECO:0007669"/>
    <property type="project" value="UniProtKB-SubCell"/>
</dbReference>
<dbReference type="GO" id="GO:0016805">
    <property type="term" value="F:dipeptidase activity"/>
    <property type="evidence" value="ECO:0007669"/>
    <property type="project" value="UniProtKB-UniRule"/>
</dbReference>
<dbReference type="GO" id="GO:0008236">
    <property type="term" value="F:serine-type peptidase activity"/>
    <property type="evidence" value="ECO:0007669"/>
    <property type="project" value="UniProtKB-KW"/>
</dbReference>
<dbReference type="GO" id="GO:0006508">
    <property type="term" value="P:proteolysis"/>
    <property type="evidence" value="ECO:0007669"/>
    <property type="project" value="UniProtKB-UniRule"/>
</dbReference>
<dbReference type="CDD" id="cd03146">
    <property type="entry name" value="GAT1_Peptidase_E"/>
    <property type="match status" value="1"/>
</dbReference>
<dbReference type="FunFam" id="3.40.50.880:FF:000007">
    <property type="entry name" value="Peptidase E"/>
    <property type="match status" value="1"/>
</dbReference>
<dbReference type="Gene3D" id="3.40.50.880">
    <property type="match status" value="1"/>
</dbReference>
<dbReference type="HAMAP" id="MF_00510">
    <property type="entry name" value="Peptidase_E"/>
    <property type="match status" value="1"/>
</dbReference>
<dbReference type="InterPro" id="IPR029062">
    <property type="entry name" value="Class_I_gatase-like"/>
</dbReference>
<dbReference type="InterPro" id="IPR005320">
    <property type="entry name" value="Peptidase_S51"/>
</dbReference>
<dbReference type="InterPro" id="IPR023172">
    <property type="entry name" value="Peptidase_S51_dipeptidase-E"/>
</dbReference>
<dbReference type="NCBIfam" id="NF003642">
    <property type="entry name" value="PRK05282.1"/>
    <property type="match status" value="1"/>
</dbReference>
<dbReference type="PANTHER" id="PTHR20842:SF0">
    <property type="entry name" value="ALPHA-ASPARTYL DIPEPTIDASE"/>
    <property type="match status" value="1"/>
</dbReference>
<dbReference type="PANTHER" id="PTHR20842">
    <property type="entry name" value="PROTEASE S51 ALPHA-ASPARTYL DIPEPTIDASE"/>
    <property type="match status" value="1"/>
</dbReference>
<dbReference type="Pfam" id="PF03575">
    <property type="entry name" value="Peptidase_S51"/>
    <property type="match status" value="1"/>
</dbReference>
<dbReference type="SUPFAM" id="SSF52317">
    <property type="entry name" value="Class I glutamine amidotransferase-like"/>
    <property type="match status" value="1"/>
</dbReference>